<keyword id="KW-0030">Aminoacyl-tRNA synthetase</keyword>
<keyword id="KW-0067">ATP-binding</keyword>
<keyword id="KW-0963">Cytoplasm</keyword>
<keyword id="KW-0436">Ligase</keyword>
<keyword id="KW-0547">Nucleotide-binding</keyword>
<keyword id="KW-0648">Protein biosynthesis</keyword>
<keyword id="KW-1185">Reference proteome</keyword>
<reference key="1">
    <citation type="journal article" date="2004" name="J. Mol. Microbiol. Biotechnol.">
        <title>The complete genome sequence of Bacillus licheniformis DSM13, an organism with great industrial potential.</title>
        <authorList>
            <person name="Veith B."/>
            <person name="Herzberg C."/>
            <person name="Steckel S."/>
            <person name="Feesche J."/>
            <person name="Maurer K.H."/>
            <person name="Ehrenreich P."/>
            <person name="Baeumer S."/>
            <person name="Henne A."/>
            <person name="Liesegang H."/>
            <person name="Merkl R."/>
            <person name="Ehrenreich A."/>
            <person name="Gottschalk G."/>
        </authorList>
    </citation>
    <scope>NUCLEOTIDE SEQUENCE [LARGE SCALE GENOMIC DNA]</scope>
    <source>
        <strain>ATCC 14580 / DSM 13 / JCM 2505 / CCUG 7422 / NBRC 12200 / NCIMB 9375 / NCTC 10341 / NRRL NRS-1264 / Gibson 46</strain>
    </source>
</reference>
<reference key="2">
    <citation type="journal article" date="2004" name="Genome Biol.">
        <title>Complete genome sequence of the industrial bacterium Bacillus licheniformis and comparisons with closely related Bacillus species.</title>
        <authorList>
            <person name="Rey M.W."/>
            <person name="Ramaiya P."/>
            <person name="Nelson B.A."/>
            <person name="Brody-Karpin S.D."/>
            <person name="Zaretsky E.J."/>
            <person name="Tang M."/>
            <person name="Lopez de Leon A."/>
            <person name="Xiang H."/>
            <person name="Gusti V."/>
            <person name="Clausen I.G."/>
            <person name="Olsen P.B."/>
            <person name="Rasmussen M.D."/>
            <person name="Andersen J.T."/>
            <person name="Joergensen P.L."/>
            <person name="Larsen T.S."/>
            <person name="Sorokin A."/>
            <person name="Bolotin A."/>
            <person name="Lapidus A."/>
            <person name="Galleron N."/>
            <person name="Ehrlich S.D."/>
            <person name="Berka R.M."/>
        </authorList>
    </citation>
    <scope>NUCLEOTIDE SEQUENCE [LARGE SCALE GENOMIC DNA]</scope>
    <source>
        <strain>ATCC 14580 / DSM 13 / JCM 2505 / CCUG 7422 / NBRC 12200 / NCIMB 9375 / NCTC 10341 / NRRL NRS-1264 / Gibson 46</strain>
    </source>
</reference>
<protein>
    <recommendedName>
        <fullName evidence="1">Glutamate--tRNA ligase</fullName>
        <ecNumber evidence="1">6.1.1.17</ecNumber>
    </recommendedName>
    <alternativeName>
        <fullName evidence="1">Glutamyl-tRNA synthetase</fullName>
        <shortName evidence="1">GluRS</shortName>
    </alternativeName>
</protein>
<gene>
    <name evidence="1" type="primary">gltX</name>
    <name type="ordered locus">BLi00110</name>
    <name type="ordered locus">BL03267</name>
</gene>
<organism>
    <name type="scientific">Bacillus licheniformis (strain ATCC 14580 / DSM 13 / JCM 2505 / CCUG 7422 / NBRC 12200 / NCIMB 9375 / NCTC 10341 / NRRL NRS-1264 / Gibson 46)</name>
    <dbReference type="NCBI Taxonomy" id="279010"/>
    <lineage>
        <taxon>Bacteria</taxon>
        <taxon>Bacillati</taxon>
        <taxon>Bacillota</taxon>
        <taxon>Bacilli</taxon>
        <taxon>Bacillales</taxon>
        <taxon>Bacillaceae</taxon>
        <taxon>Bacillus</taxon>
    </lineage>
</organism>
<comment type="function">
    <text evidence="1">Catalyzes the attachment of glutamate to tRNA(Glu) in a two-step reaction: glutamate is first activated by ATP to form Glu-AMP and then transferred to the acceptor end of tRNA(Glu).</text>
</comment>
<comment type="catalytic activity">
    <reaction evidence="1">
        <text>tRNA(Glu) + L-glutamate + ATP = L-glutamyl-tRNA(Glu) + AMP + diphosphate</text>
        <dbReference type="Rhea" id="RHEA:23540"/>
        <dbReference type="Rhea" id="RHEA-COMP:9663"/>
        <dbReference type="Rhea" id="RHEA-COMP:9680"/>
        <dbReference type="ChEBI" id="CHEBI:29985"/>
        <dbReference type="ChEBI" id="CHEBI:30616"/>
        <dbReference type="ChEBI" id="CHEBI:33019"/>
        <dbReference type="ChEBI" id="CHEBI:78442"/>
        <dbReference type="ChEBI" id="CHEBI:78520"/>
        <dbReference type="ChEBI" id="CHEBI:456215"/>
        <dbReference type="EC" id="6.1.1.17"/>
    </reaction>
</comment>
<comment type="subunit">
    <text evidence="1">Monomer.</text>
</comment>
<comment type="subcellular location">
    <subcellularLocation>
        <location evidence="1">Cytoplasm</location>
    </subcellularLocation>
</comment>
<comment type="similarity">
    <text evidence="1">Belongs to the class-I aminoacyl-tRNA synthetase family. Glutamate--tRNA ligase type 1 subfamily.</text>
</comment>
<name>SYE_BACLD</name>
<evidence type="ECO:0000255" key="1">
    <source>
        <dbReference type="HAMAP-Rule" id="MF_00022"/>
    </source>
</evidence>
<proteinExistence type="inferred from homology"/>
<sequence>MGNEVRVRYAPSPTGHLHIGNARTALFNYLFARSQGGKFIIRIEDTDRKRNIEGGEQSQLNYLKWLGIDWDESVDVGGEYGPYRQSERNDIYKTYYEELLEKGLAYKCYCTEEELEKEREEQAARGEMPRYSGKCRNLTKEEQEKLEAEGRQPSIRFKVPQGEVIRFDDIVKGEISFETDGIGDFVIVKKDGTPTYNFAVAVDDYLMKMTHVLRGEDHISNTPKQIMIYNALGWDIPAFGHMTLIVNESRKKLSKRDESIIQFIEQYEELGYLPEALFNFITLLGWSPVGEEELFTKEQFIEIFDVNRLSKSPAVFDTHKLKWVNNQYVKKLDLDQVIELTVPHLQKAGKVSEELSGSEQEWVRKLISLYQEQLSYGAEIVELTELFFKDDIQYNREARTVLEEEQVPEVLRVFAEKLEQLDSFTADEIKASIKAVQKETGHKGKKLFMPIRVATTGQTHGPELPQSIELLGKDTVLKRLHNIIQ</sequence>
<feature type="chain" id="PRO_0000119505" description="Glutamate--tRNA ligase">
    <location>
        <begin position="1"/>
        <end position="485"/>
    </location>
</feature>
<feature type="short sequence motif" description="'HIGH' region" evidence="1">
    <location>
        <begin position="11"/>
        <end position="21"/>
    </location>
</feature>
<feature type="short sequence motif" description="'KMSKS' region" evidence="1">
    <location>
        <begin position="252"/>
        <end position="256"/>
    </location>
</feature>
<feature type="binding site" evidence="1">
    <location>
        <position position="255"/>
    </location>
    <ligand>
        <name>ATP</name>
        <dbReference type="ChEBI" id="CHEBI:30616"/>
    </ligand>
</feature>
<dbReference type="EC" id="6.1.1.17" evidence="1"/>
<dbReference type="EMBL" id="AE017333">
    <property type="protein sequence ID" value="AAU39084.1"/>
    <property type="molecule type" value="Genomic_DNA"/>
</dbReference>
<dbReference type="EMBL" id="CP000002">
    <property type="protein sequence ID" value="AAU21740.1"/>
    <property type="molecule type" value="Genomic_DNA"/>
</dbReference>
<dbReference type="RefSeq" id="WP_009330348.1">
    <property type="nucleotide sequence ID" value="NC_006322.1"/>
</dbReference>
<dbReference type="SMR" id="Q65PD0"/>
<dbReference type="STRING" id="279010.BL03267"/>
<dbReference type="GeneID" id="92858926"/>
<dbReference type="KEGG" id="bld:BLi00110"/>
<dbReference type="KEGG" id="bli:BL03267"/>
<dbReference type="PATRIC" id="fig|279010.13.peg.99"/>
<dbReference type="eggNOG" id="COG0008">
    <property type="taxonomic scope" value="Bacteria"/>
</dbReference>
<dbReference type="HOGENOM" id="CLU_015768_6_1_9"/>
<dbReference type="Proteomes" id="UP000000606">
    <property type="component" value="Chromosome"/>
</dbReference>
<dbReference type="GO" id="GO:0005829">
    <property type="term" value="C:cytosol"/>
    <property type="evidence" value="ECO:0007669"/>
    <property type="project" value="TreeGrafter"/>
</dbReference>
<dbReference type="GO" id="GO:0005524">
    <property type="term" value="F:ATP binding"/>
    <property type="evidence" value="ECO:0007669"/>
    <property type="project" value="UniProtKB-UniRule"/>
</dbReference>
<dbReference type="GO" id="GO:0004818">
    <property type="term" value="F:glutamate-tRNA ligase activity"/>
    <property type="evidence" value="ECO:0007669"/>
    <property type="project" value="UniProtKB-UniRule"/>
</dbReference>
<dbReference type="GO" id="GO:0000049">
    <property type="term" value="F:tRNA binding"/>
    <property type="evidence" value="ECO:0007669"/>
    <property type="project" value="InterPro"/>
</dbReference>
<dbReference type="GO" id="GO:0008270">
    <property type="term" value="F:zinc ion binding"/>
    <property type="evidence" value="ECO:0007669"/>
    <property type="project" value="InterPro"/>
</dbReference>
<dbReference type="GO" id="GO:0006424">
    <property type="term" value="P:glutamyl-tRNA aminoacylation"/>
    <property type="evidence" value="ECO:0007669"/>
    <property type="project" value="UniProtKB-UniRule"/>
</dbReference>
<dbReference type="CDD" id="cd00808">
    <property type="entry name" value="GluRS_core"/>
    <property type="match status" value="1"/>
</dbReference>
<dbReference type="FunFam" id="1.10.10.350:FF:000002">
    <property type="entry name" value="Glutamate--tRNA ligase"/>
    <property type="match status" value="1"/>
</dbReference>
<dbReference type="FunFam" id="3.40.50.620:FF:000007">
    <property type="entry name" value="Glutamate--tRNA ligase"/>
    <property type="match status" value="1"/>
</dbReference>
<dbReference type="Gene3D" id="1.10.10.350">
    <property type="match status" value="1"/>
</dbReference>
<dbReference type="Gene3D" id="3.40.50.620">
    <property type="entry name" value="HUPs"/>
    <property type="match status" value="1"/>
</dbReference>
<dbReference type="HAMAP" id="MF_00022">
    <property type="entry name" value="Glu_tRNA_synth_type1"/>
    <property type="match status" value="1"/>
</dbReference>
<dbReference type="InterPro" id="IPR045462">
    <property type="entry name" value="aa-tRNA-synth_I_cd-bd"/>
</dbReference>
<dbReference type="InterPro" id="IPR020751">
    <property type="entry name" value="aa-tRNA-synth_I_codon-bd_sub2"/>
</dbReference>
<dbReference type="InterPro" id="IPR001412">
    <property type="entry name" value="aa-tRNA-synth_I_CS"/>
</dbReference>
<dbReference type="InterPro" id="IPR008925">
    <property type="entry name" value="aa_tRNA-synth_I_cd-bd_sf"/>
</dbReference>
<dbReference type="InterPro" id="IPR004527">
    <property type="entry name" value="Glu-tRNA-ligase_bac/mito"/>
</dbReference>
<dbReference type="InterPro" id="IPR000924">
    <property type="entry name" value="Glu/Gln-tRNA-synth"/>
</dbReference>
<dbReference type="InterPro" id="IPR020058">
    <property type="entry name" value="Glu/Gln-tRNA-synth_Ib_cat-dom"/>
</dbReference>
<dbReference type="InterPro" id="IPR049940">
    <property type="entry name" value="GluQ/Sye"/>
</dbReference>
<dbReference type="InterPro" id="IPR033910">
    <property type="entry name" value="GluRS_core"/>
</dbReference>
<dbReference type="InterPro" id="IPR014729">
    <property type="entry name" value="Rossmann-like_a/b/a_fold"/>
</dbReference>
<dbReference type="NCBIfam" id="TIGR00464">
    <property type="entry name" value="gltX_bact"/>
    <property type="match status" value="1"/>
</dbReference>
<dbReference type="PANTHER" id="PTHR43311">
    <property type="entry name" value="GLUTAMATE--TRNA LIGASE"/>
    <property type="match status" value="1"/>
</dbReference>
<dbReference type="PANTHER" id="PTHR43311:SF2">
    <property type="entry name" value="GLUTAMATE--TRNA LIGASE, MITOCHONDRIAL-RELATED"/>
    <property type="match status" value="1"/>
</dbReference>
<dbReference type="Pfam" id="PF19269">
    <property type="entry name" value="Anticodon_2"/>
    <property type="match status" value="1"/>
</dbReference>
<dbReference type="Pfam" id="PF00749">
    <property type="entry name" value="tRNA-synt_1c"/>
    <property type="match status" value="1"/>
</dbReference>
<dbReference type="PRINTS" id="PR00987">
    <property type="entry name" value="TRNASYNTHGLU"/>
</dbReference>
<dbReference type="SUPFAM" id="SSF48163">
    <property type="entry name" value="An anticodon-binding domain of class I aminoacyl-tRNA synthetases"/>
    <property type="match status" value="1"/>
</dbReference>
<dbReference type="SUPFAM" id="SSF52374">
    <property type="entry name" value="Nucleotidylyl transferase"/>
    <property type="match status" value="1"/>
</dbReference>
<dbReference type="PROSITE" id="PS00178">
    <property type="entry name" value="AA_TRNA_LIGASE_I"/>
    <property type="match status" value="1"/>
</dbReference>
<accession>Q65PD0</accession>
<accession>Q62ZR8</accession>